<proteinExistence type="inferred from homology"/>
<gene>
    <name evidence="1" type="primary">cbiD</name>
    <name type="ordered locus">Tola_1678</name>
</gene>
<reference key="1">
    <citation type="submission" date="2009-05" db="EMBL/GenBank/DDBJ databases">
        <title>Complete sequence of Tolumonas auensis DSM 9187.</title>
        <authorList>
            <consortium name="US DOE Joint Genome Institute"/>
            <person name="Lucas S."/>
            <person name="Copeland A."/>
            <person name="Lapidus A."/>
            <person name="Glavina del Rio T."/>
            <person name="Tice H."/>
            <person name="Bruce D."/>
            <person name="Goodwin L."/>
            <person name="Pitluck S."/>
            <person name="Chertkov O."/>
            <person name="Brettin T."/>
            <person name="Detter J.C."/>
            <person name="Han C."/>
            <person name="Larimer F."/>
            <person name="Land M."/>
            <person name="Hauser L."/>
            <person name="Kyrpides N."/>
            <person name="Mikhailova N."/>
            <person name="Spring S."/>
            <person name="Beller H."/>
        </authorList>
    </citation>
    <scope>NUCLEOTIDE SEQUENCE [LARGE SCALE GENOMIC DNA]</scope>
    <source>
        <strain>DSM 9187 / NBRC 110442 / TA 4</strain>
    </source>
</reference>
<protein>
    <recommendedName>
        <fullName evidence="1">Cobalt-precorrin-5B C(1)-methyltransferase</fullName>
        <ecNumber evidence="1">2.1.1.195</ecNumber>
    </recommendedName>
    <alternativeName>
        <fullName evidence="1">Cobalt-precorrin-6A synthase</fullName>
    </alternativeName>
</protein>
<dbReference type="EC" id="2.1.1.195" evidence="1"/>
<dbReference type="EMBL" id="CP001616">
    <property type="protein sequence ID" value="ACQ93288.1"/>
    <property type="molecule type" value="Genomic_DNA"/>
</dbReference>
<dbReference type="RefSeq" id="WP_015878759.1">
    <property type="nucleotide sequence ID" value="NC_012691.1"/>
</dbReference>
<dbReference type="SMR" id="C4LFC1"/>
<dbReference type="STRING" id="595494.Tola_1678"/>
<dbReference type="KEGG" id="tau:Tola_1678"/>
<dbReference type="eggNOG" id="COG1903">
    <property type="taxonomic scope" value="Bacteria"/>
</dbReference>
<dbReference type="HOGENOM" id="CLU_041273_1_0_6"/>
<dbReference type="OrthoDB" id="6439987at2"/>
<dbReference type="UniPathway" id="UPA00148">
    <property type="reaction ID" value="UER00227"/>
</dbReference>
<dbReference type="Proteomes" id="UP000009073">
    <property type="component" value="Chromosome"/>
</dbReference>
<dbReference type="GO" id="GO:0043780">
    <property type="term" value="F:cobalt-precorrin-5B C1-methyltransferase activity"/>
    <property type="evidence" value="ECO:0007669"/>
    <property type="project" value="RHEA"/>
</dbReference>
<dbReference type="GO" id="GO:0019251">
    <property type="term" value="P:anaerobic cobalamin biosynthetic process"/>
    <property type="evidence" value="ECO:0007669"/>
    <property type="project" value="UniProtKB-UniRule"/>
</dbReference>
<dbReference type="GO" id="GO:0032259">
    <property type="term" value="P:methylation"/>
    <property type="evidence" value="ECO:0007669"/>
    <property type="project" value="UniProtKB-KW"/>
</dbReference>
<dbReference type="Gene3D" id="3.30.2110.10">
    <property type="entry name" value="CbiD-like"/>
    <property type="match status" value="1"/>
</dbReference>
<dbReference type="HAMAP" id="MF_00787">
    <property type="entry name" value="CbiD"/>
    <property type="match status" value="1"/>
</dbReference>
<dbReference type="InterPro" id="IPR002748">
    <property type="entry name" value="CbiD"/>
</dbReference>
<dbReference type="InterPro" id="IPR036074">
    <property type="entry name" value="CbiD_sf"/>
</dbReference>
<dbReference type="NCBIfam" id="TIGR00312">
    <property type="entry name" value="cbiD"/>
    <property type="match status" value="1"/>
</dbReference>
<dbReference type="PANTHER" id="PTHR35863">
    <property type="entry name" value="COBALT-PRECORRIN-5B C(1)-METHYLTRANSFERASE"/>
    <property type="match status" value="1"/>
</dbReference>
<dbReference type="PANTHER" id="PTHR35863:SF1">
    <property type="entry name" value="COBALT-PRECORRIN-5B C(1)-METHYLTRANSFERASE"/>
    <property type="match status" value="1"/>
</dbReference>
<dbReference type="Pfam" id="PF01888">
    <property type="entry name" value="CbiD"/>
    <property type="match status" value="1"/>
</dbReference>
<dbReference type="PIRSF" id="PIRSF026782">
    <property type="entry name" value="CbiD"/>
    <property type="match status" value="1"/>
</dbReference>
<dbReference type="SUPFAM" id="SSF111342">
    <property type="entry name" value="CbiD-like"/>
    <property type="match status" value="1"/>
</dbReference>
<evidence type="ECO:0000255" key="1">
    <source>
        <dbReference type="HAMAP-Rule" id="MF_00787"/>
    </source>
</evidence>
<feature type="chain" id="PRO_1000212946" description="Cobalt-precorrin-5B C(1)-methyltransferase">
    <location>
        <begin position="1"/>
        <end position="378"/>
    </location>
</feature>
<organism>
    <name type="scientific">Tolumonas auensis (strain DSM 9187 / NBRC 110442 / TA 4)</name>
    <dbReference type="NCBI Taxonomy" id="595494"/>
    <lineage>
        <taxon>Bacteria</taxon>
        <taxon>Pseudomonadati</taxon>
        <taxon>Pseudomonadota</taxon>
        <taxon>Gammaproteobacteria</taxon>
        <taxon>Aeromonadales</taxon>
        <taxon>Aeromonadaceae</taxon>
        <taxon>Tolumonas</taxon>
    </lineage>
</organism>
<sequence length="378" mass="41095">MNIALADDKVWHKGKSYRKGYTTGSCATAAAKVATLMILRQQVIHQVSIVTPSGVTLQLNVEEPLIHGLQASAAIRKDGGDDVDATHGMLIYAQVVLRNDATITISGGTGVGKVTRKGIGLPVGNAAINKTPLQTIEAAVREVLGPERGADITIFAPEGEERAQRTYNGRLGIEGGISIIGTTGIVTPMSEESWKRSLALELEQKRAQGMEKIILVPGNHGERFVREQMQLDSELVVTMSNFVGYMLQEAERLAFRHVVLIGHLGKLIKVAAGIFHTHSHIADGRMETLITHLALLGAPNSLLQAIYACNTTEAAMELIEAQGYQEVYNTIATRICERINQMLRYSPQPFQCDAILFSLDNQPLGSNRPITDIVEALR</sequence>
<comment type="function">
    <text evidence="1">Catalyzes the methylation of C-1 in cobalt-precorrin-5B to form cobalt-precorrin-6A.</text>
</comment>
<comment type="catalytic activity">
    <reaction evidence="1">
        <text>Co-precorrin-5B + S-adenosyl-L-methionine = Co-precorrin-6A + S-adenosyl-L-homocysteine</text>
        <dbReference type="Rhea" id="RHEA:26285"/>
        <dbReference type="ChEBI" id="CHEBI:57856"/>
        <dbReference type="ChEBI" id="CHEBI:59789"/>
        <dbReference type="ChEBI" id="CHEBI:60063"/>
        <dbReference type="ChEBI" id="CHEBI:60064"/>
        <dbReference type="EC" id="2.1.1.195"/>
    </reaction>
</comment>
<comment type="pathway">
    <text evidence="1">Cofactor biosynthesis; adenosylcobalamin biosynthesis; cob(II)yrinate a,c-diamide from sirohydrochlorin (anaerobic route): step 6/10.</text>
</comment>
<comment type="similarity">
    <text evidence="1">Belongs to the CbiD family.</text>
</comment>
<name>CBID_TOLAT</name>
<accession>C4LFC1</accession>
<keyword id="KW-0169">Cobalamin biosynthesis</keyword>
<keyword id="KW-0489">Methyltransferase</keyword>
<keyword id="KW-1185">Reference proteome</keyword>
<keyword id="KW-0949">S-adenosyl-L-methionine</keyword>
<keyword id="KW-0808">Transferase</keyword>